<evidence type="ECO:0000269" key="1">
    <source>
    </source>
</evidence>
<reference key="1">
    <citation type="journal article" date="1989" name="New Biol.">
        <title>Functional relationships and structural determinants of two bacteriophage T4 lysozymes: a soluble (gene e) and a baseplate-associated (gene 5) protein.</title>
        <authorList>
            <person name="Mosig G."/>
            <person name="Lin G.W."/>
            <person name="Franklin J."/>
            <person name="Fan W.H."/>
        </authorList>
    </citation>
    <scope>NUCLEOTIDE SEQUENCE [GENOMIC DNA]</scope>
</reference>
<reference key="2">
    <citation type="journal article" date="2003" name="Microbiol. Mol. Biol. Rev.">
        <title>Bacteriophage T4 genome.</title>
        <authorList>
            <person name="Miller E.S."/>
            <person name="Kutter E."/>
            <person name="Mosig G."/>
            <person name="Arisaka F."/>
            <person name="Kunisawa T."/>
            <person name="Ruger W."/>
        </authorList>
    </citation>
    <scope>NUCLEOTIDE SEQUENCE [LARGE SCALE GENOMIC DNA]</scope>
</reference>
<reference key="3">
    <citation type="journal article" date="1999" name="J. Bacteriol.">
        <title>Two new early bacteriophage T4 genes, repEA and repEB, that are important for DNA replication initiated from origin E.</title>
        <authorList>
            <person name="Vaiskunaite R."/>
            <person name="Miller A."/>
            <person name="Davenport L."/>
            <person name="Mosig G."/>
        </authorList>
    </citation>
    <scope>IDENTIFICATION</scope>
    <scope>FUNCTION</scope>
</reference>
<comment type="function">
    <text evidence="1">Involved in T4 DNA replication. Binds to ssDNA.</text>
</comment>
<accession>P32284</accession>
<name>REPEA_BPT4</name>
<proteinExistence type="predicted"/>
<gene>
    <name type="primary">repEA</name>
    <name type="synonym">dbpB</name>
</gene>
<protein>
    <recommendedName>
        <fullName>DNA replication protein repEA</fullName>
    </recommendedName>
    <alternativeName>
        <fullName>DNA-binding protein dbpB</fullName>
    </alternativeName>
</protein>
<organism>
    <name type="scientific">Enterobacteria phage T4</name>
    <name type="common">Bacteriophage T4</name>
    <dbReference type="NCBI Taxonomy" id="10665"/>
    <lineage>
        <taxon>Viruses</taxon>
        <taxon>Duplodnaviria</taxon>
        <taxon>Heunggongvirae</taxon>
        <taxon>Uroviricota</taxon>
        <taxon>Caudoviricetes</taxon>
        <taxon>Straboviridae</taxon>
        <taxon>Tevenvirinae</taxon>
        <taxon>Tequatrovirus</taxon>
    </lineage>
</organism>
<feature type="chain" id="PRO_0000164974" description="DNA replication protein repEA">
    <location>
        <begin position="1"/>
        <end position="50"/>
    </location>
</feature>
<dbReference type="EMBL" id="X15728">
    <property type="status" value="NOT_ANNOTATED_CDS"/>
    <property type="molecule type" value="Genomic_DNA"/>
</dbReference>
<dbReference type="EMBL" id="AF158101">
    <property type="protein sequence ID" value="AAD42504.1"/>
    <property type="molecule type" value="Genomic_DNA"/>
</dbReference>
<dbReference type="RefSeq" id="NP_049759.1">
    <property type="nucleotide sequence ID" value="NC_000866.4"/>
</dbReference>
<dbReference type="GeneID" id="1258819"/>
<dbReference type="KEGG" id="vg:1258819"/>
<dbReference type="Proteomes" id="UP000009087">
    <property type="component" value="Segment"/>
</dbReference>
<dbReference type="GO" id="GO:0003677">
    <property type="term" value="F:DNA binding"/>
    <property type="evidence" value="ECO:0007669"/>
    <property type="project" value="UniProtKB-KW"/>
</dbReference>
<dbReference type="GO" id="GO:0090592">
    <property type="term" value="P:DNA synthesis involved in DNA replication"/>
    <property type="evidence" value="ECO:0000315"/>
    <property type="project" value="CACAO"/>
</dbReference>
<sequence>MVILLHKFQLDELIYIVLAQGYHQIPEYVRFQFPLYAHKDIHLYMKKLVL</sequence>
<keyword id="KW-0235">DNA replication</keyword>
<keyword id="KW-0238">DNA-binding</keyword>
<keyword id="KW-1185">Reference proteome</keyword>
<organismHost>
    <name type="scientific">Escherichia coli</name>
    <dbReference type="NCBI Taxonomy" id="562"/>
</organismHost>